<protein>
    <recommendedName>
        <fullName>Complex I intermediate-associated protein 84, mitochondrial</fullName>
    </recommendedName>
</protein>
<gene>
    <name type="primary">cia84</name>
    <name type="synonym">cia80</name>
    <name type="ORF">B11O8.100</name>
    <name type="ORF">NCU01006</name>
</gene>
<proteinExistence type="evidence at protein level"/>
<feature type="transit peptide" description="Mitochondrion">
    <location>
        <begin position="1"/>
        <end position="69"/>
    </location>
</feature>
<feature type="chain" id="PRO_0000020929" description="Complex I intermediate-associated protein 84, mitochondrial">
    <location>
        <begin position="70"/>
        <end position="797"/>
    </location>
</feature>
<feature type="sequence conflict" description="In Ref. 1; CAA04945." evidence="2" ref="1">
    <original>RPPPR</original>
    <variation>LPTST</variation>
    <location>
        <begin position="106"/>
        <end position="110"/>
    </location>
</feature>
<feature type="sequence conflict" description="In Ref. 1; CAA04945." evidence="2" ref="1">
    <original>A</original>
    <variation>P</variation>
    <location>
        <position position="749"/>
    </location>
</feature>
<keyword id="KW-0143">Chaperone</keyword>
<keyword id="KW-0903">Direct protein sequencing</keyword>
<keyword id="KW-0496">Mitochondrion</keyword>
<keyword id="KW-1185">Reference proteome</keyword>
<keyword id="KW-0809">Transit peptide</keyword>
<dbReference type="EMBL" id="AJ001712">
    <property type="protein sequence ID" value="CAA04945.1"/>
    <property type="status" value="ALT_FRAME"/>
    <property type="molecule type" value="Genomic_DNA"/>
</dbReference>
<dbReference type="EMBL" id="BX294014">
    <property type="protein sequence ID" value="CAD70828.1"/>
    <property type="molecule type" value="Genomic_DNA"/>
</dbReference>
<dbReference type="EMBL" id="CM002240">
    <property type="protein sequence ID" value="EAA32382.3"/>
    <property type="status" value="ALT_SEQ"/>
    <property type="molecule type" value="Genomic_DNA"/>
</dbReference>
<dbReference type="PIR" id="T47250">
    <property type="entry name" value="T47250"/>
</dbReference>
<dbReference type="RefSeq" id="XP_961618.3">
    <property type="nucleotide sequence ID" value="XM_956525.3"/>
</dbReference>
<dbReference type="SMR" id="O42637"/>
<dbReference type="STRING" id="367110.O42637"/>
<dbReference type="PaxDb" id="5141-EFNCRP00000004252"/>
<dbReference type="EnsemblFungi" id="EAA32382">
    <property type="protein sequence ID" value="EAA32382"/>
    <property type="gene ID" value="NCU01006"/>
</dbReference>
<dbReference type="GeneID" id="3877825"/>
<dbReference type="KEGG" id="ncr:NCU01006"/>
<dbReference type="HOGENOM" id="CLU_019319_0_0_1"/>
<dbReference type="InParanoid" id="O42637"/>
<dbReference type="OrthoDB" id="185373at2759"/>
<dbReference type="Proteomes" id="UP000001805">
    <property type="component" value="Chromosome 2, Linkage Group V"/>
</dbReference>
<dbReference type="GO" id="GO:0005739">
    <property type="term" value="C:mitochondrion"/>
    <property type="evidence" value="ECO:0000318"/>
    <property type="project" value="GO_Central"/>
</dbReference>
<dbReference type="GO" id="GO:0003729">
    <property type="term" value="F:mRNA binding"/>
    <property type="evidence" value="ECO:0000318"/>
    <property type="project" value="GO_Central"/>
</dbReference>
<dbReference type="GO" id="GO:0140053">
    <property type="term" value="P:mitochondrial gene expression"/>
    <property type="evidence" value="ECO:0000318"/>
    <property type="project" value="GO_Central"/>
</dbReference>
<dbReference type="Gene3D" id="1.25.40.10">
    <property type="entry name" value="Tetratricopeptide repeat domain"/>
    <property type="match status" value="2"/>
</dbReference>
<dbReference type="InterPro" id="IPR011990">
    <property type="entry name" value="TPR-like_helical_dom_sf"/>
</dbReference>
<dbReference type="PANTHER" id="PTHR47938:SF35">
    <property type="entry name" value="PENTATRICOPEPTIDE REPEAT-CONTAINING PROTEIN 4, MITOCHONDRIAL-RELATED"/>
    <property type="match status" value="1"/>
</dbReference>
<dbReference type="PANTHER" id="PTHR47938">
    <property type="entry name" value="RESPIRATORY COMPLEX I CHAPERONE (CIA84), PUTATIVE (AFU_ORTHOLOGUE AFUA_2G06020)-RELATED"/>
    <property type="match status" value="1"/>
</dbReference>
<name>CIA84_NEUCR</name>
<evidence type="ECO:0000269" key="1">
    <source>
    </source>
</evidence>
<evidence type="ECO:0000305" key="2"/>
<comment type="function">
    <text evidence="1">Chaperone protein involved in the assembly of the mitochondrial NADH:ubiquinone oxidoreductase complex (complex I).</text>
</comment>
<comment type="subcellular location">
    <subcellularLocation>
        <location evidence="1">Mitochondrion</location>
    </subcellularLocation>
</comment>
<comment type="sequence caution" evidence="2">
    <conflict type="frameshift">
        <sequence resource="EMBL-CDS" id="CAA04945"/>
    </conflict>
</comment>
<comment type="sequence caution" evidence="2">
    <conflict type="erroneous gene model prediction">
        <sequence resource="EMBL-CDS" id="EAA32382"/>
    </conflict>
</comment>
<reference key="1">
    <citation type="journal article" date="1998" name="J. Mol. Biol.">
        <title>Involvement of two novel chaperones in the assembly of mitochondrial NADH:ubiquinone oxidoreductase (complex 1).</title>
        <authorList>
            <person name="Kueffner R."/>
            <person name="Rohr A."/>
            <person name="Schmiede A."/>
            <person name="Kruell C."/>
            <person name="Schulte U."/>
        </authorList>
    </citation>
    <scope>NUCLEOTIDE SEQUENCE [GENOMIC DNA]</scope>
    <scope>PARTIAL PROTEIN SEQUENCE</scope>
    <scope>FUNCTION</scope>
    <scope>SUBCELLULAR LOCATION</scope>
</reference>
<reference key="2">
    <citation type="journal article" date="2003" name="Nucleic Acids Res.">
        <title>What's in the genome of a filamentous fungus? Analysis of the Neurospora genome sequence.</title>
        <authorList>
            <person name="Mannhaupt G."/>
            <person name="Montrone C."/>
            <person name="Haase D."/>
            <person name="Mewes H.-W."/>
            <person name="Aign V."/>
            <person name="Hoheisel J.D."/>
            <person name="Fartmann B."/>
            <person name="Nyakatura G."/>
            <person name="Kempken F."/>
            <person name="Maier J."/>
            <person name="Schulte U."/>
        </authorList>
    </citation>
    <scope>NUCLEOTIDE SEQUENCE [LARGE SCALE GENOMIC DNA]</scope>
    <source>
        <strain>ATCC 24698 / 74-OR23-1A / CBS 708.71 / DSM 1257 / FGSC 987</strain>
    </source>
</reference>
<reference key="3">
    <citation type="journal article" date="2003" name="Nature">
        <title>The genome sequence of the filamentous fungus Neurospora crassa.</title>
        <authorList>
            <person name="Galagan J.E."/>
            <person name="Calvo S.E."/>
            <person name="Borkovich K.A."/>
            <person name="Selker E.U."/>
            <person name="Read N.D."/>
            <person name="Jaffe D.B."/>
            <person name="FitzHugh W."/>
            <person name="Ma L.-J."/>
            <person name="Smirnov S."/>
            <person name="Purcell S."/>
            <person name="Rehman B."/>
            <person name="Elkins T."/>
            <person name="Engels R."/>
            <person name="Wang S."/>
            <person name="Nielsen C.B."/>
            <person name="Butler J."/>
            <person name="Endrizzi M."/>
            <person name="Qui D."/>
            <person name="Ianakiev P."/>
            <person name="Bell-Pedersen D."/>
            <person name="Nelson M.A."/>
            <person name="Werner-Washburne M."/>
            <person name="Selitrennikoff C.P."/>
            <person name="Kinsey J.A."/>
            <person name="Braun E.L."/>
            <person name="Zelter A."/>
            <person name="Schulte U."/>
            <person name="Kothe G.O."/>
            <person name="Jedd G."/>
            <person name="Mewes H.-W."/>
            <person name="Staben C."/>
            <person name="Marcotte E."/>
            <person name="Greenberg D."/>
            <person name="Roy A."/>
            <person name="Foley K."/>
            <person name="Naylor J."/>
            <person name="Stange-Thomann N."/>
            <person name="Barrett R."/>
            <person name="Gnerre S."/>
            <person name="Kamal M."/>
            <person name="Kamvysselis M."/>
            <person name="Mauceli E.W."/>
            <person name="Bielke C."/>
            <person name="Rudd S."/>
            <person name="Frishman D."/>
            <person name="Krystofova S."/>
            <person name="Rasmussen C."/>
            <person name="Metzenberg R.L."/>
            <person name="Perkins D.D."/>
            <person name="Kroken S."/>
            <person name="Cogoni C."/>
            <person name="Macino G."/>
            <person name="Catcheside D.E.A."/>
            <person name="Li W."/>
            <person name="Pratt R.J."/>
            <person name="Osmani S.A."/>
            <person name="DeSouza C.P.C."/>
            <person name="Glass N.L."/>
            <person name="Orbach M.J."/>
            <person name="Berglund J.A."/>
            <person name="Voelker R."/>
            <person name="Yarden O."/>
            <person name="Plamann M."/>
            <person name="Seiler S."/>
            <person name="Dunlap J.C."/>
            <person name="Radford A."/>
            <person name="Aramayo R."/>
            <person name="Natvig D.O."/>
            <person name="Alex L.A."/>
            <person name="Mannhaupt G."/>
            <person name="Ebbole D.J."/>
            <person name="Freitag M."/>
            <person name="Paulsen I."/>
            <person name="Sachs M.S."/>
            <person name="Lander E.S."/>
            <person name="Nusbaum C."/>
            <person name="Birren B.W."/>
        </authorList>
    </citation>
    <scope>NUCLEOTIDE SEQUENCE [LARGE SCALE GENOMIC DNA]</scope>
    <source>
        <strain>ATCC 24698 / 74-OR23-1A / CBS 708.71 / DSM 1257 / FGSC 987</strain>
    </source>
</reference>
<sequence>MRSHLARNATTTTPNVYRRLHAAVGHHHGLLRPCSATALSARRCLFDCQHDVAHIPRDVALCTRTSKRTFISLFTPKPERFVKLPHFDPGYNVLLQYRKSEVEQERPPPRDQLVTAFKKLTKFKADTNRPLNPNQAFLLRTVLHYLLVTKPEADAPVDLKMSDLENAMDAALLPPKGSPEFHLALARLLHEEIMRRRLILLNPEERKVHLTKDDFARYIKALTQYGGSLEAAGRVKEFWQQLKDERSAVYFRGSGRIWIMVLEGLANEGREEELLQFWEEAQETGGIKYIPGVHQIFVTYYARQDKIEETKQWYSKPIHSGFSPTGETLLELVRSSRRSSQKWNEWLLPVFEQVVQDKFAKKGSLDAFLQWSVLALDKGPDGIKTYLQTMASGDFYQSHEVKVDATTINRLMQAAQEKGNPYMAERFWQLAQDFNIKANVHTYLNQMSYRLDANDIEGAHQIFSKLASGAVEVEFDEDLPVMNKYLRVLCAQQEPNIQHILTITSALEQRHAVLEPETIVALCLVFLNHDKKFDVIDTLSLHSVSISHIERQQIYKAFVDYICSPQTTTDRAWDAYSLLRQYFPETSVDDRVRLMESFFERKKPDMACLVFGHMRAHDDDNMHPTADIYVRCLEGLGRCPIPEQRPSDPASSLKMVHNMLKMDTRVEMNTRLYNALMLAYAAGGDPFTALDFWEEHITRSAEGPSYNSLAIVFWCCELIPLGDRYARPVWQKMLRMDLEVPQLGLTYNALPDPVSKDEFAAWAKEEYPEEWARLESKGQKETEFQGPVFNITRLFEA</sequence>
<accession>O42637</accession>
<accession>Q7S820</accession>
<accession>Q872A6</accession>
<organism>
    <name type="scientific">Neurospora crassa (strain ATCC 24698 / 74-OR23-1A / CBS 708.71 / DSM 1257 / FGSC 987)</name>
    <dbReference type="NCBI Taxonomy" id="367110"/>
    <lineage>
        <taxon>Eukaryota</taxon>
        <taxon>Fungi</taxon>
        <taxon>Dikarya</taxon>
        <taxon>Ascomycota</taxon>
        <taxon>Pezizomycotina</taxon>
        <taxon>Sordariomycetes</taxon>
        <taxon>Sordariomycetidae</taxon>
        <taxon>Sordariales</taxon>
        <taxon>Sordariaceae</taxon>
        <taxon>Neurospora</taxon>
    </lineage>
</organism>